<proteinExistence type="inferred from homology"/>
<keyword id="KW-0423">Lactose metabolism</keyword>
<keyword id="KW-0456">Lyase</keyword>
<keyword id="KW-1185">Reference proteome</keyword>
<accession>Q8DXC3</accession>
<comment type="catalytic activity">
    <reaction evidence="1">
        <text>D-tagatofuranose 1,6-bisphosphate = D-glyceraldehyde 3-phosphate + dihydroxyacetone phosphate</text>
        <dbReference type="Rhea" id="RHEA:22948"/>
        <dbReference type="ChEBI" id="CHEBI:57642"/>
        <dbReference type="ChEBI" id="CHEBI:58694"/>
        <dbReference type="ChEBI" id="CHEBI:59776"/>
        <dbReference type="EC" id="4.1.2.40"/>
    </reaction>
</comment>
<comment type="pathway">
    <text evidence="1">Carbohydrate metabolism; D-tagatose 6-phosphate degradation; D-glyceraldehyde 3-phosphate and glycerone phosphate from D-tagatose 6-phosphate: step 2/2.</text>
</comment>
<comment type="similarity">
    <text evidence="1">Belongs to the aldolase LacD family.</text>
</comment>
<protein>
    <recommendedName>
        <fullName evidence="1">Tagatose 1,6-diphosphate aldolase</fullName>
        <ecNumber evidence="1">4.1.2.40</ecNumber>
    </recommendedName>
    <alternativeName>
        <fullName evidence="1">D-tagatose-1,6-bisphosphate aldolase</fullName>
    </alternativeName>
    <alternativeName>
        <fullName evidence="1">Tagatose-bisphosphate aldolase</fullName>
    </alternativeName>
</protein>
<organism>
    <name type="scientific">Streptococcus agalactiae serotype V (strain ATCC BAA-611 / 2603 V/R)</name>
    <dbReference type="NCBI Taxonomy" id="208435"/>
    <lineage>
        <taxon>Bacteria</taxon>
        <taxon>Bacillati</taxon>
        <taxon>Bacillota</taxon>
        <taxon>Bacilli</taxon>
        <taxon>Lactobacillales</taxon>
        <taxon>Streptococcaceae</taxon>
        <taxon>Streptococcus</taxon>
    </lineage>
</organism>
<sequence>MGLTEQKQKHMEQLSDKNGIISALAFDQRGALKRLMAKYQSEEPTVSQIEALKVLVAEELTPYASSMLLDPEYGLPATKVLDDNAGLLLAYEKTGYDTSSTKRLPDCLDIWSAKRIKEEGADAVKFLLYYDVDSSDEVNEEKEAYIERIGSECVAEDIPFFLEILSYDEKITDSSGIEYAKIKPRKVIEAMKVFSNPRFNIDVLKVEVPVNMDYVEGFAQGETAYNKATAAAYFREQDQATLLPYIFLSAGVPAQLFQETLVFAKEAGAKFNGVLCGRATWAGSVKEYVEKGEAGARQWLRTIGFQNIDELNKILQKTATSWKER</sequence>
<name>LACD_STRA5</name>
<gene>
    <name evidence="1" type="primary">lacD</name>
    <name type="ordered locus">SAG1928</name>
</gene>
<dbReference type="EC" id="4.1.2.40" evidence="1"/>
<dbReference type="EMBL" id="AE009948">
    <property type="protein sequence ID" value="AAN00790.1"/>
    <property type="molecule type" value="Genomic_DNA"/>
</dbReference>
<dbReference type="RefSeq" id="NP_688917.1">
    <property type="nucleotide sequence ID" value="NC_004116.1"/>
</dbReference>
<dbReference type="RefSeq" id="WP_000524689.1">
    <property type="nucleotide sequence ID" value="NC_004116.1"/>
</dbReference>
<dbReference type="SMR" id="Q8DXC3"/>
<dbReference type="STRING" id="208435.SAG1928"/>
<dbReference type="GeneID" id="66886712"/>
<dbReference type="KEGG" id="sag:SAG1928"/>
<dbReference type="PATRIC" id="fig|208435.3.peg.1933"/>
<dbReference type="HOGENOM" id="CLU_058971_0_1_9"/>
<dbReference type="OrthoDB" id="106309at2"/>
<dbReference type="UniPathway" id="UPA00704">
    <property type="reaction ID" value="UER00716"/>
</dbReference>
<dbReference type="Proteomes" id="UP000000821">
    <property type="component" value="Chromosome"/>
</dbReference>
<dbReference type="GO" id="GO:0061595">
    <property type="term" value="F:6-deoxy-6-sulfofructose-1-phosphate aldolase activity"/>
    <property type="evidence" value="ECO:0007669"/>
    <property type="project" value="TreeGrafter"/>
</dbReference>
<dbReference type="GO" id="GO:0009024">
    <property type="term" value="F:tagatose-6-phosphate kinase activity"/>
    <property type="evidence" value="ECO:0007669"/>
    <property type="project" value="InterPro"/>
</dbReference>
<dbReference type="GO" id="GO:0009025">
    <property type="term" value="F:tagatose-bisphosphate aldolase activity"/>
    <property type="evidence" value="ECO:0007669"/>
    <property type="project" value="UniProtKB-UniRule"/>
</dbReference>
<dbReference type="GO" id="GO:1902777">
    <property type="term" value="P:6-sulfoquinovose(1-) catabolic process"/>
    <property type="evidence" value="ECO:0007669"/>
    <property type="project" value="TreeGrafter"/>
</dbReference>
<dbReference type="GO" id="GO:2001059">
    <property type="term" value="P:D-tagatose 6-phosphate catabolic process"/>
    <property type="evidence" value="ECO:0007669"/>
    <property type="project" value="UniProtKB-UniRule"/>
</dbReference>
<dbReference type="GO" id="GO:0019512">
    <property type="term" value="P:lactose catabolic process via tagatose-6-phosphate"/>
    <property type="evidence" value="ECO:0007669"/>
    <property type="project" value="InterPro"/>
</dbReference>
<dbReference type="FunFam" id="3.20.20.70:FF:000137">
    <property type="entry name" value="Tagatose 1,6-diphosphate aldolase 2"/>
    <property type="match status" value="1"/>
</dbReference>
<dbReference type="Gene3D" id="3.20.20.70">
    <property type="entry name" value="Aldolase class I"/>
    <property type="match status" value="1"/>
</dbReference>
<dbReference type="HAMAP" id="MF_00734">
    <property type="entry name" value="LacD"/>
    <property type="match status" value="1"/>
</dbReference>
<dbReference type="InterPro" id="IPR013785">
    <property type="entry name" value="Aldolase_TIM"/>
</dbReference>
<dbReference type="InterPro" id="IPR002915">
    <property type="entry name" value="DeoC/FbaB/LacD_aldolase"/>
</dbReference>
<dbReference type="InterPro" id="IPR050552">
    <property type="entry name" value="LacD_aldolase"/>
</dbReference>
<dbReference type="InterPro" id="IPR005927">
    <property type="entry name" value="Tag_1.6-dipho_adolase"/>
</dbReference>
<dbReference type="NCBIfam" id="TIGR01232">
    <property type="entry name" value="lacD"/>
    <property type="match status" value="1"/>
</dbReference>
<dbReference type="NCBIfam" id="NF003180">
    <property type="entry name" value="PRK04161.1"/>
    <property type="match status" value="1"/>
</dbReference>
<dbReference type="NCBIfam" id="NF009065">
    <property type="entry name" value="PRK12399.1"/>
    <property type="match status" value="1"/>
</dbReference>
<dbReference type="NCBIfam" id="NF009498">
    <property type="entry name" value="PRK12858.1"/>
    <property type="match status" value="1"/>
</dbReference>
<dbReference type="PANTHER" id="PTHR39340">
    <property type="entry name" value="SULFOFRUCTOSEPHOSPHATE ALDOLASE"/>
    <property type="match status" value="1"/>
</dbReference>
<dbReference type="PANTHER" id="PTHR39340:SF1">
    <property type="entry name" value="SULFOFRUCTOSEPHOSPHATE ALDOLASE"/>
    <property type="match status" value="1"/>
</dbReference>
<dbReference type="Pfam" id="PF01791">
    <property type="entry name" value="DeoC"/>
    <property type="match status" value="1"/>
</dbReference>
<dbReference type="SMART" id="SM01133">
    <property type="entry name" value="DeoC"/>
    <property type="match status" value="1"/>
</dbReference>
<dbReference type="SUPFAM" id="SSF51569">
    <property type="entry name" value="Aldolase"/>
    <property type="match status" value="1"/>
</dbReference>
<evidence type="ECO:0000255" key="1">
    <source>
        <dbReference type="HAMAP-Rule" id="MF_00734"/>
    </source>
</evidence>
<feature type="chain" id="PRO_0000203955" description="Tagatose 1,6-diphosphate aldolase">
    <location>
        <begin position="1"/>
        <end position="325"/>
    </location>
</feature>
<reference key="1">
    <citation type="journal article" date="2002" name="Proc. Natl. Acad. Sci. U.S.A.">
        <title>Complete genome sequence and comparative genomic analysis of an emerging human pathogen, serotype V Streptococcus agalactiae.</title>
        <authorList>
            <person name="Tettelin H."/>
            <person name="Masignani V."/>
            <person name="Cieslewicz M.J."/>
            <person name="Eisen J.A."/>
            <person name="Peterson S.N."/>
            <person name="Wessels M.R."/>
            <person name="Paulsen I.T."/>
            <person name="Nelson K.E."/>
            <person name="Margarit I."/>
            <person name="Read T.D."/>
            <person name="Madoff L.C."/>
            <person name="Wolf A.M."/>
            <person name="Beanan M.J."/>
            <person name="Brinkac L.M."/>
            <person name="Daugherty S.C."/>
            <person name="DeBoy R.T."/>
            <person name="Durkin A.S."/>
            <person name="Kolonay J.F."/>
            <person name="Madupu R."/>
            <person name="Lewis M.R."/>
            <person name="Radune D."/>
            <person name="Fedorova N.B."/>
            <person name="Scanlan D."/>
            <person name="Khouri H.M."/>
            <person name="Mulligan S."/>
            <person name="Carty H.A."/>
            <person name="Cline R.T."/>
            <person name="Van Aken S.E."/>
            <person name="Gill J."/>
            <person name="Scarselli M."/>
            <person name="Mora M."/>
            <person name="Iacobini E.T."/>
            <person name="Brettoni C."/>
            <person name="Galli G."/>
            <person name="Mariani M."/>
            <person name="Vegni F."/>
            <person name="Maione D."/>
            <person name="Rinaudo D."/>
            <person name="Rappuoli R."/>
            <person name="Telford J.L."/>
            <person name="Kasper D.L."/>
            <person name="Grandi G."/>
            <person name="Fraser C.M."/>
        </authorList>
    </citation>
    <scope>NUCLEOTIDE SEQUENCE [LARGE SCALE GENOMIC DNA]</scope>
    <source>
        <strain>ATCC BAA-611 / 2603 V/R</strain>
    </source>
</reference>